<comment type="function">
    <text evidence="1">Core subunit of the mitochondrial membrane respiratory chain NADH dehydrogenase (Complex I) which catalyzes electron transfer from NADH through the respiratory chain, using ubiquinone as an electron acceptor. Part of the enzyme membrane arm which is embedded in the lipid bilayer and involved in proton translocation.</text>
</comment>
<comment type="catalytic activity">
    <reaction evidence="1">
        <text>a ubiquinone + NADH + 5 H(+)(in) = a ubiquinol + NAD(+) + 4 H(+)(out)</text>
        <dbReference type="Rhea" id="RHEA:29091"/>
        <dbReference type="Rhea" id="RHEA-COMP:9565"/>
        <dbReference type="Rhea" id="RHEA-COMP:9566"/>
        <dbReference type="ChEBI" id="CHEBI:15378"/>
        <dbReference type="ChEBI" id="CHEBI:16389"/>
        <dbReference type="ChEBI" id="CHEBI:17976"/>
        <dbReference type="ChEBI" id="CHEBI:57540"/>
        <dbReference type="ChEBI" id="CHEBI:57945"/>
        <dbReference type="EC" id="7.1.1.2"/>
    </reaction>
    <physiologicalReaction direction="left-to-right" evidence="1">
        <dbReference type="Rhea" id="RHEA:29092"/>
    </physiologicalReaction>
</comment>
<comment type="subunit">
    <text evidence="2">Core subunit of respiratory chain NADH dehydrogenase (Complex I) which is composed of 45 different subunits.</text>
</comment>
<comment type="subcellular location">
    <subcellularLocation>
        <location evidence="2">Mitochondrion inner membrane</location>
        <topology evidence="3">Multi-pass membrane protein</topology>
    </subcellularLocation>
</comment>
<comment type="similarity">
    <text evidence="4">Belongs to the complex I subunit 4L family.</text>
</comment>
<reference key="1">
    <citation type="journal article" date="2000" name="Zoology">
        <title>The complete mitochondrial genome sequence of the African elephant (Loxodonta africana), phylogenetic relationships of Proboscidea to other mammals and D-loop heteroplasmy.</title>
        <authorList>
            <person name="Hauf J."/>
            <person name="Waddell P.J."/>
            <person name="Chalwatzis N."/>
            <person name="Joger U."/>
            <person name="Zimmermann F.K."/>
        </authorList>
    </citation>
    <scope>NUCLEOTIDE SEQUENCE [GENOMIC DNA]</scope>
    <source>
        <tissue>Blood</tissue>
    </source>
</reference>
<reference key="2">
    <citation type="journal article" date="2006" name="PLoS Biol.">
        <title>Complete mitochondrial genome and phylogeny of Pleistocene mammoth Mammuthus primigenius.</title>
        <authorList>
            <person name="Rogaev E.I."/>
            <person name="Moliaka Y.K."/>
            <person name="Malyarchuk B.A."/>
            <person name="Kondrashov F.A."/>
            <person name="Derenko M.V."/>
            <person name="Chumakov I."/>
            <person name="Grigorenko A.P."/>
        </authorList>
    </citation>
    <scope>NUCLEOTIDE SEQUENCE [GENOMIC DNA]</scope>
    <source>
        <tissue>Blood</tissue>
    </source>
</reference>
<evidence type="ECO:0000250" key="1">
    <source>
        <dbReference type="UniProtKB" id="P03901"/>
    </source>
</evidence>
<evidence type="ECO:0000250" key="2">
    <source>
        <dbReference type="UniProtKB" id="P03902"/>
    </source>
</evidence>
<evidence type="ECO:0000255" key="3"/>
<evidence type="ECO:0000305" key="4"/>
<proteinExistence type="inferred from homology"/>
<accession>Q9TA21</accession>
<accession>Q2I3F3</accession>
<organism>
    <name type="scientific">Loxodonta africana</name>
    <name type="common">African elephant</name>
    <dbReference type="NCBI Taxonomy" id="9785"/>
    <lineage>
        <taxon>Eukaryota</taxon>
        <taxon>Metazoa</taxon>
        <taxon>Chordata</taxon>
        <taxon>Craniata</taxon>
        <taxon>Vertebrata</taxon>
        <taxon>Euteleostomi</taxon>
        <taxon>Mammalia</taxon>
        <taxon>Eutheria</taxon>
        <taxon>Afrotheria</taxon>
        <taxon>Proboscidea</taxon>
        <taxon>Elephantidae</taxon>
        <taxon>Loxodonta</taxon>
    </lineage>
</organism>
<keyword id="KW-0249">Electron transport</keyword>
<keyword id="KW-0472">Membrane</keyword>
<keyword id="KW-0496">Mitochondrion</keyword>
<keyword id="KW-0999">Mitochondrion inner membrane</keyword>
<keyword id="KW-0520">NAD</keyword>
<keyword id="KW-1185">Reference proteome</keyword>
<keyword id="KW-0679">Respiratory chain</keyword>
<keyword id="KW-1278">Translocase</keyword>
<keyword id="KW-0812">Transmembrane</keyword>
<keyword id="KW-1133">Transmembrane helix</keyword>
<keyword id="KW-0813">Transport</keyword>
<keyword id="KW-0830">Ubiquinone</keyword>
<geneLocation type="mitochondrion"/>
<gene>
    <name type="primary">MT-ND4L</name>
    <name type="synonym">MTND4L</name>
    <name type="synonym">NADH4L</name>
    <name type="synonym">ND4L</name>
</gene>
<protein>
    <recommendedName>
        <fullName>NADH-ubiquinone oxidoreductase chain 4L</fullName>
        <ecNumber>7.1.1.2</ecNumber>
    </recommendedName>
    <alternativeName>
        <fullName>NADH dehydrogenase subunit 4L</fullName>
    </alternativeName>
</protein>
<sequence>MPYIYMNITLAFVISLIGTLMYRSHLMSSLLCLEGMMLSLFTLNALLSLNMNFTLSTTVPLILLVFAACEAAVGLALLVMISNTYGLDYVQNLNLLQC</sequence>
<dbReference type="EC" id="7.1.1.2"/>
<dbReference type="EMBL" id="AJ224821">
    <property type="protein sequence ID" value="CAA12146.1"/>
    <property type="molecule type" value="Genomic_DNA"/>
</dbReference>
<dbReference type="EMBL" id="DQ316069">
    <property type="protein sequence ID" value="ABC17912.1"/>
    <property type="molecule type" value="Genomic_DNA"/>
</dbReference>
<dbReference type="PIR" id="T45558">
    <property type="entry name" value="T45558"/>
</dbReference>
<dbReference type="RefSeq" id="NP_009287.1">
    <property type="nucleotide sequence ID" value="NC_000934.1"/>
</dbReference>
<dbReference type="SMR" id="Q9TA21"/>
<dbReference type="FunCoup" id="Q9TA21">
    <property type="interactions" value="53"/>
</dbReference>
<dbReference type="STRING" id="9785.ENSLAFP00000029499"/>
<dbReference type="Ensembl" id="ENSLAFT00000038061.1">
    <property type="protein sequence ID" value="ENSLAFP00000029499.1"/>
    <property type="gene ID" value="ENSLAFG00000033295.1"/>
</dbReference>
<dbReference type="GeneID" id="808785"/>
<dbReference type="KEGG" id="lav:808785"/>
<dbReference type="CTD" id="4539"/>
<dbReference type="eggNOG" id="KOG4669">
    <property type="taxonomic scope" value="Eukaryota"/>
</dbReference>
<dbReference type="GeneTree" id="ENSGT00390000004755"/>
<dbReference type="HOGENOM" id="CLU_182394_0_0_1"/>
<dbReference type="InParanoid" id="Q9TA21"/>
<dbReference type="OMA" id="MYRSHLM"/>
<dbReference type="OrthoDB" id="6146597at2759"/>
<dbReference type="TreeFam" id="TF338190"/>
<dbReference type="Proteomes" id="UP000007646">
    <property type="component" value="Unassembled WGS sequence"/>
</dbReference>
<dbReference type="GO" id="GO:0005743">
    <property type="term" value="C:mitochondrial inner membrane"/>
    <property type="evidence" value="ECO:0000250"/>
    <property type="project" value="UniProtKB"/>
</dbReference>
<dbReference type="GO" id="GO:0045271">
    <property type="term" value="C:respiratory chain complex I"/>
    <property type="evidence" value="ECO:0000250"/>
    <property type="project" value="UniProtKB"/>
</dbReference>
<dbReference type="GO" id="GO:0008137">
    <property type="term" value="F:NADH dehydrogenase (ubiquinone) activity"/>
    <property type="evidence" value="ECO:0000250"/>
    <property type="project" value="UniProtKB"/>
</dbReference>
<dbReference type="GO" id="GO:0042773">
    <property type="term" value="P:ATP synthesis coupled electron transport"/>
    <property type="evidence" value="ECO:0007669"/>
    <property type="project" value="InterPro"/>
</dbReference>
<dbReference type="FunFam" id="1.10.287.3510:FF:000002">
    <property type="entry name" value="NADH-ubiquinone oxidoreductase chain 4L"/>
    <property type="match status" value="1"/>
</dbReference>
<dbReference type="Gene3D" id="1.10.287.3510">
    <property type="match status" value="1"/>
</dbReference>
<dbReference type="InterPro" id="IPR001133">
    <property type="entry name" value="NADH_UbQ_OxRdtase_chain4L/K"/>
</dbReference>
<dbReference type="InterPro" id="IPR039428">
    <property type="entry name" value="NUOK/Mnh_C1-like"/>
</dbReference>
<dbReference type="PANTHER" id="PTHR11434:SF0">
    <property type="entry name" value="NADH-UBIQUINONE OXIDOREDUCTASE CHAIN 4L"/>
    <property type="match status" value="1"/>
</dbReference>
<dbReference type="PANTHER" id="PTHR11434">
    <property type="entry name" value="NADH-UBIQUINONE OXIDOREDUCTASE SUBUNIT ND4L"/>
    <property type="match status" value="1"/>
</dbReference>
<dbReference type="Pfam" id="PF00420">
    <property type="entry name" value="Oxidored_q2"/>
    <property type="match status" value="1"/>
</dbReference>
<name>NU4LM_LOXAF</name>
<feature type="chain" id="PRO_0000118437" description="NADH-ubiquinone oxidoreductase chain 4L">
    <location>
        <begin position="1"/>
        <end position="98"/>
    </location>
</feature>
<feature type="transmembrane region" description="Helical" evidence="3">
    <location>
        <begin position="1"/>
        <end position="21"/>
    </location>
</feature>
<feature type="transmembrane region" description="Helical" evidence="3">
    <location>
        <begin position="29"/>
        <end position="49"/>
    </location>
</feature>
<feature type="transmembrane region" description="Helical" evidence="3">
    <location>
        <begin position="61"/>
        <end position="81"/>
    </location>
</feature>